<accession>O58758</accession>
<organism>
    <name type="scientific">Pyrococcus horikoshii (strain ATCC 700860 / DSM 12428 / JCM 9974 / NBRC 100139 / OT-3)</name>
    <dbReference type="NCBI Taxonomy" id="70601"/>
    <lineage>
        <taxon>Archaea</taxon>
        <taxon>Methanobacteriati</taxon>
        <taxon>Methanobacteriota</taxon>
        <taxon>Thermococci</taxon>
        <taxon>Thermococcales</taxon>
        <taxon>Thermococcaceae</taxon>
        <taxon>Pyrococcus</taxon>
    </lineage>
</organism>
<evidence type="ECO:0000255" key="1"/>
<evidence type="ECO:0000255" key="2">
    <source>
        <dbReference type="PROSITE-ProRule" id="PRU00303"/>
    </source>
</evidence>
<evidence type="ECO:0000305" key="3"/>
<comment type="function">
    <text>Probably part of a binding-protein-dependent transport system PH1036/38/39.</text>
</comment>
<comment type="subcellular location">
    <subcellularLocation>
        <location evidence="2">Cell membrane</location>
        <topology evidence="2">Lipid-anchor</topology>
    </subcellularLocation>
</comment>
<comment type="similarity">
    <text evidence="3">Belongs to the bacterial solute-binding protein 1 family.</text>
</comment>
<name>Y1039_PYRHO</name>
<proteinExistence type="inferred from homology"/>
<dbReference type="EMBL" id="BA000001">
    <property type="protein sequence ID" value="BAA30137.1"/>
    <property type="molecule type" value="Genomic_DNA"/>
</dbReference>
<dbReference type="PIR" id="C71097">
    <property type="entry name" value="C71097"/>
</dbReference>
<dbReference type="SMR" id="O58758"/>
<dbReference type="STRING" id="70601.gene:9377997"/>
<dbReference type="EnsemblBacteria" id="BAA30137">
    <property type="protein sequence ID" value="BAA30137"/>
    <property type="gene ID" value="BAA30137"/>
</dbReference>
<dbReference type="KEGG" id="pho:PH1039"/>
<dbReference type="eggNOG" id="arCOG00149">
    <property type="taxonomic scope" value="Archaea"/>
</dbReference>
<dbReference type="OrthoDB" id="18034at2157"/>
<dbReference type="Proteomes" id="UP000000752">
    <property type="component" value="Chromosome"/>
</dbReference>
<dbReference type="GO" id="GO:0005886">
    <property type="term" value="C:plasma membrane"/>
    <property type="evidence" value="ECO:0007669"/>
    <property type="project" value="UniProtKB-SubCell"/>
</dbReference>
<dbReference type="Gene3D" id="3.40.190.10">
    <property type="entry name" value="Periplasmic binding protein-like II"/>
    <property type="match status" value="1"/>
</dbReference>
<dbReference type="InterPro" id="IPR050490">
    <property type="entry name" value="Bact_solute-bd_prot1"/>
</dbReference>
<dbReference type="InterPro" id="IPR006059">
    <property type="entry name" value="SBP"/>
</dbReference>
<dbReference type="PANTHER" id="PTHR43649">
    <property type="entry name" value="ARABINOSE-BINDING PROTEIN-RELATED"/>
    <property type="match status" value="1"/>
</dbReference>
<dbReference type="PANTHER" id="PTHR43649:SF29">
    <property type="entry name" value="OSMOPROTECTIVE COMPOUNDS-BINDING PROTEIN GGTB"/>
    <property type="match status" value="1"/>
</dbReference>
<dbReference type="Pfam" id="PF01547">
    <property type="entry name" value="SBP_bac_1"/>
    <property type="match status" value="1"/>
</dbReference>
<dbReference type="SUPFAM" id="SSF53850">
    <property type="entry name" value="Periplasmic binding protein-like II"/>
    <property type="match status" value="1"/>
</dbReference>
<dbReference type="PROSITE" id="PS51257">
    <property type="entry name" value="PROKAR_LIPOPROTEIN"/>
    <property type="match status" value="1"/>
</dbReference>
<feature type="signal peptide" evidence="2">
    <location>
        <begin position="1"/>
        <end position="25"/>
    </location>
</feature>
<feature type="chain" id="PRO_0000031716" description="Uncharacterized ABC transporter extracellular-binding protein PH1039">
    <location>
        <begin position="26"/>
        <end position="420"/>
    </location>
</feature>
<feature type="modified residue" description="N-acetylcysteine" evidence="1">
    <location>
        <position position="26"/>
    </location>
</feature>
<feature type="lipid moiety-binding region" description="S-archaeol cysteine" evidence="1">
    <location>
        <position position="26"/>
    </location>
</feature>
<keyword id="KW-0007">Acetylation</keyword>
<keyword id="KW-1003">Cell membrane</keyword>
<keyword id="KW-0449">Lipoprotein</keyword>
<keyword id="KW-0472">Membrane</keyword>
<keyword id="KW-0732">Signal</keyword>
<keyword id="KW-0813">Transport</keyword>
<reference key="1">
    <citation type="journal article" date="1998" name="DNA Res.">
        <title>Complete sequence and gene organization of the genome of a hyper-thermophilic archaebacterium, Pyrococcus horikoshii OT3.</title>
        <authorList>
            <person name="Kawarabayasi Y."/>
            <person name="Sawada M."/>
            <person name="Horikawa H."/>
            <person name="Haikawa Y."/>
            <person name="Hino Y."/>
            <person name="Yamamoto S."/>
            <person name="Sekine M."/>
            <person name="Baba S."/>
            <person name="Kosugi H."/>
            <person name="Hosoyama A."/>
            <person name="Nagai Y."/>
            <person name="Sakai M."/>
            <person name="Ogura K."/>
            <person name="Otsuka R."/>
            <person name="Nakazawa H."/>
            <person name="Takamiya M."/>
            <person name="Ohfuku Y."/>
            <person name="Funahashi T."/>
            <person name="Tanaka T."/>
            <person name="Kudoh Y."/>
            <person name="Yamazaki J."/>
            <person name="Kushida N."/>
            <person name="Oguchi A."/>
            <person name="Aoki K."/>
            <person name="Yoshizawa T."/>
            <person name="Nakamura Y."/>
            <person name="Robb F.T."/>
            <person name="Horikoshi K."/>
            <person name="Masuchi Y."/>
            <person name="Shizuya H."/>
            <person name="Kikuchi H."/>
        </authorList>
    </citation>
    <scope>NUCLEOTIDE SEQUENCE [LARGE SCALE GENOMIC DNA]</scope>
    <source>
        <strain>ATCC 700860 / DSM 12428 / JCM 9974 / NBRC 100139 / OT-3</strain>
    </source>
</reference>
<sequence>MRYAMNKIPALLLVGALIIATVASGCIGGTTTTETPTVTKTKTQEVITLKVIGPWSGAELDAFMEVLKAFEKQHPNIKIEYKTYRAEDLSTILPLQFESHDTPADVIFMWGWFIAEMGKKGHLMELNNIINPEEYVPGILDSVTVDGKIYGAPFTAAAKPGFWYRKSFFEKHNLKPPKTWDDFVALLEEIKKIPGIKAPIVSGDSVGWPLSDVTEHFILTFGGKDLQLKLIKGEVKWEDPQVRKIFEEKLVPLLKAGYFSDPIEWTSAVDLWWKGEYALYFMGTWITGMVDDPNDLGLIPLPGVKAMVIAPDYLMVPKYTSHPKEALELAKFLATEGQRIHVGTKSGKLATWKKVSIDDYWAPMRDVAKIVANVESAPDLDDSVGGEWQKVFWDQLKLLWVQPDRLDEVLKTLDEKFPKK</sequence>
<protein>
    <recommendedName>
        <fullName>Uncharacterized ABC transporter extracellular-binding protein PH1039</fullName>
    </recommendedName>
</protein>
<gene>
    <name type="ordered locus">PH1039</name>
    <name type="ORF">PHAJ014</name>
</gene>